<organism>
    <name type="scientific">Latilactobacillus sakei subsp. sakei (strain 23K)</name>
    <name type="common">Lactobacillus sakei subsp. sakei</name>
    <dbReference type="NCBI Taxonomy" id="314315"/>
    <lineage>
        <taxon>Bacteria</taxon>
        <taxon>Bacillati</taxon>
        <taxon>Bacillota</taxon>
        <taxon>Bacilli</taxon>
        <taxon>Lactobacillales</taxon>
        <taxon>Lactobacillaceae</taxon>
        <taxon>Latilactobacillus</taxon>
    </lineage>
</organism>
<proteinExistence type="inferred from homology"/>
<protein>
    <recommendedName>
        <fullName evidence="1">Nucleotide-binding protein LCA_0526</fullName>
    </recommendedName>
</protein>
<accession>Q38YA1</accession>
<sequence>MTDTLNLVVITGMSGAGKTVAMQSFEDLGYFCVDNMPPSLLPKFWELVKESGKVTKIALVIDLRSRAFYDGIIEMLSGLDNTQFVTTKILFLDASDEELVSRYKETRRSHPLARNGRLMDGIHKERELLTEIRNQSQMVVNTSMLSPRELREQIFRVFKTSDNPSFHIEVMSFGFKYGLPIDADIVMDVRFLPNPYYVAEFKALNGLDKPVRDYVMEQPATEKFYQQLTALLKSIMPGYLKEGKTSVTIAIGCTGGQHRSVALAQRLADDLAVDYPVDVTHRDMKKRKESVNRS</sequence>
<name>Y526_LATSS</name>
<feature type="chain" id="PRO_0000258969" description="Nucleotide-binding protein LCA_0526">
    <location>
        <begin position="1"/>
        <end position="294"/>
    </location>
</feature>
<feature type="binding site" evidence="1">
    <location>
        <begin position="12"/>
        <end position="19"/>
    </location>
    <ligand>
        <name>ATP</name>
        <dbReference type="ChEBI" id="CHEBI:30616"/>
    </ligand>
</feature>
<feature type="binding site" evidence="1">
    <location>
        <begin position="62"/>
        <end position="65"/>
    </location>
    <ligand>
        <name>GTP</name>
        <dbReference type="ChEBI" id="CHEBI:37565"/>
    </ligand>
</feature>
<reference key="1">
    <citation type="journal article" date="2005" name="Nat. Biotechnol.">
        <title>The complete genome sequence of the meat-borne lactic acid bacterium Lactobacillus sakei 23K.</title>
        <authorList>
            <person name="Chaillou S."/>
            <person name="Champomier-Verges M.-C."/>
            <person name="Cornet M."/>
            <person name="Crutz-Le Coq A.-M."/>
            <person name="Dudez A.-M."/>
            <person name="Martin V."/>
            <person name="Beaufils S."/>
            <person name="Darbon-Rongere E."/>
            <person name="Bossy R."/>
            <person name="Loux V."/>
            <person name="Zagorec M."/>
        </authorList>
    </citation>
    <scope>NUCLEOTIDE SEQUENCE [LARGE SCALE GENOMIC DNA]</scope>
    <source>
        <strain>23K</strain>
    </source>
</reference>
<gene>
    <name type="ordered locus">LCA_0526</name>
</gene>
<evidence type="ECO:0000255" key="1">
    <source>
        <dbReference type="HAMAP-Rule" id="MF_00636"/>
    </source>
</evidence>
<keyword id="KW-0067">ATP-binding</keyword>
<keyword id="KW-0342">GTP-binding</keyword>
<keyword id="KW-0547">Nucleotide-binding</keyword>
<keyword id="KW-1185">Reference proteome</keyword>
<comment type="function">
    <text evidence="1">Displays ATPase and GTPase activities.</text>
</comment>
<comment type="similarity">
    <text evidence="1">Belongs to the RapZ-like family.</text>
</comment>
<dbReference type="EMBL" id="CR936503">
    <property type="protein sequence ID" value="CAI54826.1"/>
    <property type="molecule type" value="Genomic_DNA"/>
</dbReference>
<dbReference type="SMR" id="Q38YA1"/>
<dbReference type="STRING" id="314315.LCA_0526"/>
<dbReference type="KEGG" id="lsa:LCA_0526"/>
<dbReference type="eggNOG" id="COG1660">
    <property type="taxonomic scope" value="Bacteria"/>
</dbReference>
<dbReference type="HOGENOM" id="CLU_059558_0_0_9"/>
<dbReference type="OrthoDB" id="9784461at2"/>
<dbReference type="Proteomes" id="UP000002707">
    <property type="component" value="Chromosome"/>
</dbReference>
<dbReference type="GO" id="GO:0005524">
    <property type="term" value="F:ATP binding"/>
    <property type="evidence" value="ECO:0007669"/>
    <property type="project" value="UniProtKB-UniRule"/>
</dbReference>
<dbReference type="GO" id="GO:0005525">
    <property type="term" value="F:GTP binding"/>
    <property type="evidence" value="ECO:0007669"/>
    <property type="project" value="UniProtKB-UniRule"/>
</dbReference>
<dbReference type="Gene3D" id="3.40.50.300">
    <property type="entry name" value="P-loop containing nucleotide triphosphate hydrolases"/>
    <property type="match status" value="1"/>
</dbReference>
<dbReference type="HAMAP" id="MF_00636">
    <property type="entry name" value="RapZ_like"/>
    <property type="match status" value="1"/>
</dbReference>
<dbReference type="InterPro" id="IPR027417">
    <property type="entry name" value="P-loop_NTPase"/>
</dbReference>
<dbReference type="InterPro" id="IPR005337">
    <property type="entry name" value="RapZ-like"/>
</dbReference>
<dbReference type="InterPro" id="IPR053930">
    <property type="entry name" value="RapZ-like_N"/>
</dbReference>
<dbReference type="InterPro" id="IPR053931">
    <property type="entry name" value="RapZ_C"/>
</dbReference>
<dbReference type="NCBIfam" id="NF003828">
    <property type="entry name" value="PRK05416.1"/>
    <property type="match status" value="1"/>
</dbReference>
<dbReference type="PANTHER" id="PTHR30448">
    <property type="entry name" value="RNASE ADAPTER PROTEIN RAPZ"/>
    <property type="match status" value="1"/>
</dbReference>
<dbReference type="PANTHER" id="PTHR30448:SF0">
    <property type="entry name" value="RNASE ADAPTER PROTEIN RAPZ"/>
    <property type="match status" value="1"/>
</dbReference>
<dbReference type="Pfam" id="PF22740">
    <property type="entry name" value="PapZ_C"/>
    <property type="match status" value="1"/>
</dbReference>
<dbReference type="Pfam" id="PF03668">
    <property type="entry name" value="RapZ-like_N"/>
    <property type="match status" value="1"/>
</dbReference>
<dbReference type="PIRSF" id="PIRSF005052">
    <property type="entry name" value="P-loopkin"/>
    <property type="match status" value="1"/>
</dbReference>
<dbReference type="SUPFAM" id="SSF52540">
    <property type="entry name" value="P-loop containing nucleoside triphosphate hydrolases"/>
    <property type="match status" value="1"/>
</dbReference>